<reference key="1">
    <citation type="journal article" date="2005" name="J. Bacteriol.">
        <title>Insights on evolution of virulence and resistance from the complete genome analysis of an early methicillin-resistant Staphylococcus aureus strain and a biofilm-producing methicillin-resistant Staphylococcus epidermidis strain.</title>
        <authorList>
            <person name="Gill S.R."/>
            <person name="Fouts D.E."/>
            <person name="Archer G.L."/>
            <person name="Mongodin E.F."/>
            <person name="DeBoy R.T."/>
            <person name="Ravel J."/>
            <person name="Paulsen I.T."/>
            <person name="Kolonay J.F."/>
            <person name="Brinkac L.M."/>
            <person name="Beanan M.J."/>
            <person name="Dodson R.J."/>
            <person name="Daugherty S.C."/>
            <person name="Madupu R."/>
            <person name="Angiuoli S.V."/>
            <person name="Durkin A.S."/>
            <person name="Haft D.H."/>
            <person name="Vamathevan J.J."/>
            <person name="Khouri H."/>
            <person name="Utterback T.R."/>
            <person name="Lee C."/>
            <person name="Dimitrov G."/>
            <person name="Jiang L."/>
            <person name="Qin H."/>
            <person name="Weidman J."/>
            <person name="Tran K."/>
            <person name="Kang K.H."/>
            <person name="Hance I.R."/>
            <person name="Nelson K.E."/>
            <person name="Fraser C.M."/>
        </authorList>
    </citation>
    <scope>NUCLEOTIDE SEQUENCE [LARGE SCALE GENOMIC DNA]</scope>
    <source>
        <strain>COL</strain>
    </source>
</reference>
<name>GLCU_STAAC</name>
<gene>
    <name type="primary">glcU</name>
    <name type="ordered locus">SACOL2246</name>
</gene>
<accession>Q5HDV2</accession>
<organism>
    <name type="scientific">Staphylococcus aureus (strain COL)</name>
    <dbReference type="NCBI Taxonomy" id="93062"/>
    <lineage>
        <taxon>Bacteria</taxon>
        <taxon>Bacillati</taxon>
        <taxon>Bacillota</taxon>
        <taxon>Bacilli</taxon>
        <taxon>Bacillales</taxon>
        <taxon>Staphylococcaceae</taxon>
        <taxon>Staphylococcus</taxon>
    </lineage>
</organism>
<proteinExistence type="inferred from homology"/>
<evidence type="ECO:0000250" key="1"/>
<evidence type="ECO:0000255" key="2"/>
<evidence type="ECO:0000305" key="3"/>
<protein>
    <recommendedName>
        <fullName>Probable glucose uptake protein GlcU</fullName>
    </recommendedName>
</protein>
<keyword id="KW-1003">Cell membrane</keyword>
<keyword id="KW-0472">Membrane</keyword>
<keyword id="KW-0762">Sugar transport</keyword>
<keyword id="KW-0812">Transmembrane</keyword>
<keyword id="KW-1133">Transmembrane helix</keyword>
<keyword id="KW-0813">Transport</keyword>
<dbReference type="EMBL" id="CP000046">
    <property type="protein sequence ID" value="AAW37120.1"/>
    <property type="molecule type" value="Genomic_DNA"/>
</dbReference>
<dbReference type="RefSeq" id="WP_001159898.1">
    <property type="nucleotide sequence ID" value="NZ_JBGOFO010000004.1"/>
</dbReference>
<dbReference type="KEGG" id="sac:SACOL2246"/>
<dbReference type="HOGENOM" id="CLU_076024_0_0_9"/>
<dbReference type="Proteomes" id="UP000000530">
    <property type="component" value="Chromosome"/>
</dbReference>
<dbReference type="GO" id="GO:0005886">
    <property type="term" value="C:plasma membrane"/>
    <property type="evidence" value="ECO:0007669"/>
    <property type="project" value="UniProtKB-SubCell"/>
</dbReference>
<dbReference type="GO" id="GO:0015144">
    <property type="term" value="F:carbohydrate transmembrane transporter activity"/>
    <property type="evidence" value="ECO:0007669"/>
    <property type="project" value="InterPro"/>
</dbReference>
<dbReference type="InterPro" id="IPR010651">
    <property type="entry name" value="Sugar_transport"/>
</dbReference>
<dbReference type="PANTHER" id="PTHR16119">
    <property type="entry name" value="TRANSMEMBRANE PROTEIN 144"/>
    <property type="match status" value="1"/>
</dbReference>
<dbReference type="PANTHER" id="PTHR16119:SF17">
    <property type="entry name" value="TRANSMEMBRANE PROTEIN 144"/>
    <property type="match status" value="1"/>
</dbReference>
<dbReference type="Pfam" id="PF06800">
    <property type="entry name" value="Sugar_transport"/>
    <property type="match status" value="1"/>
</dbReference>
<dbReference type="SUPFAM" id="SSF103481">
    <property type="entry name" value="Multidrug resistance efflux transporter EmrE"/>
    <property type="match status" value="2"/>
</dbReference>
<feature type="chain" id="PRO_0000213624" description="Probable glucose uptake protein GlcU">
    <location>
        <begin position="1"/>
        <end position="287"/>
    </location>
</feature>
<feature type="transmembrane region" description="Helical" evidence="2">
    <location>
        <begin position="7"/>
        <end position="29"/>
    </location>
</feature>
<feature type="transmembrane region" description="Helical" evidence="2">
    <location>
        <begin position="34"/>
        <end position="56"/>
    </location>
</feature>
<feature type="transmembrane region" description="Helical" evidence="2">
    <location>
        <begin position="58"/>
        <end position="75"/>
    </location>
</feature>
<feature type="transmembrane region" description="Helical" evidence="2">
    <location>
        <begin position="114"/>
        <end position="136"/>
    </location>
</feature>
<feature type="transmembrane region" description="Helical" evidence="2">
    <location>
        <begin position="156"/>
        <end position="178"/>
    </location>
</feature>
<feature type="transmembrane region" description="Helical" evidence="2">
    <location>
        <begin position="183"/>
        <end position="202"/>
    </location>
</feature>
<feature type="transmembrane region" description="Helical" evidence="2">
    <location>
        <begin position="209"/>
        <end position="228"/>
    </location>
</feature>
<feature type="transmembrane region" description="Helical" evidence="2">
    <location>
        <begin position="233"/>
        <end position="255"/>
    </location>
</feature>
<feature type="transmembrane region" description="Helical" evidence="2">
    <location>
        <begin position="267"/>
        <end position="286"/>
    </location>
</feature>
<comment type="function">
    <text evidence="1">Involved in the uptake of glucose.</text>
</comment>
<comment type="subcellular location">
    <subcellularLocation>
        <location evidence="3">Cell membrane</location>
        <topology evidence="3">Multi-pass membrane protein</topology>
    </subcellularLocation>
</comment>
<comment type="similarity">
    <text evidence="3">Belongs to the GRP transporter (TC 2.A.7.5) family.</text>
</comment>
<sequence length="287" mass="30393">MQFLDFLIALLPALFWGSVVLINVFVGGGPYNQIRGTTLGALIVGLGLLITGFAKFNNPTVIIVGLISGALWAFGQANQLKSISLIGVSNTMPVSTGMQLVGTTLFSVIFLGEWSSMTQIIFGLIAMILLVTGVALTSLKAKNERQSDNPEFKKAMGILIVSTVGYVGFVVLGDIFGVGGTDALFFQSVGMAIGGFILSMNHKTSLKSTALNLLPGVIWGIGNLFMFYSQPKVGVATSFSLSQLLVIVSTLGGIFILGERKDRRQMTGIWAGIIIIVIAAIILGNLK</sequence>